<name>F13_MCV2</name>
<organism>
    <name type="scientific">Molluscum contagiosum virus subtype 2</name>
    <name type="common">MOCV</name>
    <name type="synonym">MCVII</name>
    <dbReference type="NCBI Taxonomy" id="10281"/>
    <lineage>
        <taxon>Viruses</taxon>
        <taxon>Varidnaviria</taxon>
        <taxon>Bamfordvirae</taxon>
        <taxon>Nucleocytoviricota</taxon>
        <taxon>Pokkesviricetes</taxon>
        <taxon>Chitovirales</taxon>
        <taxon>Poxviridae</taxon>
        <taxon>Chordopoxvirinae</taxon>
        <taxon>Molluscipoxvirus</taxon>
        <taxon>Molluscum contagiosum virus</taxon>
    </lineage>
</organism>
<evidence type="ECO:0000250" key="1"/>
<evidence type="ECO:0000255" key="2"/>
<evidence type="ECO:0000255" key="3">
    <source>
        <dbReference type="PROSITE-ProRule" id="PRU00153"/>
    </source>
</evidence>
<sequence length="388" mass="42661">MGNLTSAQPAGCKIVETLPATLPLALPAGSMLTYDCFDTLISQTQSELCIASYCCNLRSTPEGGHVLLRLLELARANVRVTIIVDEQSRDADATQLAGVPNLRYLKMDVGELPGGKPGSLLSSFWVSDKRRFYLGSASLTGGSISTIKSLGVYSECAPLARDLRRRFRDYERLCARRCLRCLSLSTRFHLRRRCGDAFFSDAPESLIGSTRTFDADAVLAHVQAARSTIDMELLSLVPLVRDEDSVKYWPRMHDALVRAALERNVRLRLLVGLWHRSDVFSLAAVKGLHELGVGHADISVRVFAIPGAKGDAINNTKLLVVDDEYVHVSNADIDGTHYARHAFVSFNCAERTFARALGALFERDWQSSFSSPLPRALPPEPATLLSVN</sequence>
<dbReference type="EMBL" id="M63487">
    <property type="protein sequence ID" value="AAA46549.1"/>
    <property type="molecule type" value="Genomic_DNA"/>
</dbReference>
<dbReference type="PIR" id="B40340">
    <property type="entry name" value="WMVZU2"/>
</dbReference>
<dbReference type="SMR" id="P25392"/>
<dbReference type="GO" id="GO:0044167">
    <property type="term" value="C:host cell endoplasmic reticulum membrane"/>
    <property type="evidence" value="ECO:0007669"/>
    <property type="project" value="UniProtKB-SubCell"/>
</dbReference>
<dbReference type="GO" id="GO:0016020">
    <property type="term" value="C:membrane"/>
    <property type="evidence" value="ECO:0007669"/>
    <property type="project" value="UniProtKB-KW"/>
</dbReference>
<dbReference type="GO" id="GO:0019031">
    <property type="term" value="C:viral envelope"/>
    <property type="evidence" value="ECO:0007669"/>
    <property type="project" value="UniProtKB-KW"/>
</dbReference>
<dbReference type="GO" id="GO:0055036">
    <property type="term" value="C:virion membrane"/>
    <property type="evidence" value="ECO:0007669"/>
    <property type="project" value="UniProtKB-SubCell"/>
</dbReference>
<dbReference type="GO" id="GO:0003824">
    <property type="term" value="F:catalytic activity"/>
    <property type="evidence" value="ECO:0007669"/>
    <property type="project" value="InterPro"/>
</dbReference>
<dbReference type="CDD" id="cd09106">
    <property type="entry name" value="PLDc_vPLD3_4_5_like_1"/>
    <property type="match status" value="1"/>
</dbReference>
<dbReference type="CDD" id="cd09107">
    <property type="entry name" value="PLDc_vPLD3_4_5_like_2"/>
    <property type="match status" value="1"/>
</dbReference>
<dbReference type="Gene3D" id="3.30.870.10">
    <property type="entry name" value="Endonuclease Chain A"/>
    <property type="match status" value="2"/>
</dbReference>
<dbReference type="InterPro" id="IPR050874">
    <property type="entry name" value="Diverse_PLD-related"/>
</dbReference>
<dbReference type="InterPro" id="IPR032803">
    <property type="entry name" value="PLDc_3"/>
</dbReference>
<dbReference type="InterPro" id="IPR001736">
    <property type="entry name" value="PLipase_D/transphosphatidylase"/>
</dbReference>
<dbReference type="PANTHER" id="PTHR10185:SF17">
    <property type="entry name" value="GM01519P-RELATED"/>
    <property type="match status" value="1"/>
</dbReference>
<dbReference type="PANTHER" id="PTHR10185">
    <property type="entry name" value="PHOSPHOLIPASE D - RELATED"/>
    <property type="match status" value="1"/>
</dbReference>
<dbReference type="Pfam" id="PF00614">
    <property type="entry name" value="PLDc"/>
    <property type="match status" value="1"/>
</dbReference>
<dbReference type="Pfam" id="PF13918">
    <property type="entry name" value="PLDc_3"/>
    <property type="match status" value="1"/>
</dbReference>
<dbReference type="SMART" id="SM00155">
    <property type="entry name" value="PLDc"/>
    <property type="match status" value="2"/>
</dbReference>
<dbReference type="SUPFAM" id="SSF56024">
    <property type="entry name" value="Phospholipase D/nuclease"/>
    <property type="match status" value="2"/>
</dbReference>
<dbReference type="PROSITE" id="PS50035">
    <property type="entry name" value="PLD"/>
    <property type="match status" value="1"/>
</dbReference>
<reference key="1">
    <citation type="journal article" date="1991" name="J. Virol.">
        <title>Characterization of a molluscum contagiosum virus homolog of the vaccinia virus p37K major envelope antigen.</title>
        <authorList>
            <person name="Blake N.W."/>
            <person name="Porter C.D."/>
            <person name="Archard L.C."/>
        </authorList>
    </citation>
    <scope>NUCLEOTIDE SEQUENCE [GENOMIC DNA]</scope>
</reference>
<keyword id="KW-1038">Host endoplasmic reticulum</keyword>
<keyword id="KW-1043">Host membrane</keyword>
<keyword id="KW-0426">Late protein</keyword>
<keyword id="KW-0449">Lipoprotein</keyword>
<keyword id="KW-0472">Membrane</keyword>
<keyword id="KW-0519">Myristate</keyword>
<keyword id="KW-0261">Viral envelope protein</keyword>
<keyword id="KW-0946">Virion</keyword>
<proteinExistence type="inferred from homology"/>
<protein>
    <recommendedName>
        <fullName>Envelope protein F13 homolog</fullName>
    </recommendedName>
    <alternativeName>
        <fullName>43 kDa protein</fullName>
    </alternativeName>
    <alternativeName>
        <fullName>p43K</fullName>
    </alternativeName>
</protein>
<accession>P25392</accession>
<feature type="initiator methionine" description="Removed" evidence="2">
    <location>
        <position position="1"/>
    </location>
</feature>
<feature type="chain" id="PRO_0000099202" description="Envelope protein F13 homolog">
    <location>
        <begin position="2"/>
        <end position="388"/>
    </location>
</feature>
<feature type="domain" description="PLD phosphodiesterase" evidence="3">
    <location>
        <begin position="310"/>
        <end position="337"/>
    </location>
</feature>
<feature type="lipid moiety-binding region" description="N-myristoyl glycine; by host" evidence="2">
    <location>
        <position position="2"/>
    </location>
</feature>
<organismHost>
    <name type="scientific">Homo sapiens</name>
    <name type="common">Human</name>
    <dbReference type="NCBI Taxonomy" id="9606"/>
</organismHost>
<gene>
    <name type="primary">P43K</name>
</gene>
<comment type="function">
    <text evidence="1">Envelope protein associated with the inner side of the enveloped virion (EV) membrane.</text>
</comment>
<comment type="subcellular location">
    <subcellularLocation>
        <location evidence="1">Virion membrane</location>
        <topology evidence="1">Lipid-anchor</topology>
    </subcellularLocation>
    <subcellularLocation>
        <location evidence="1">Host endoplasmic reticulum membrane</location>
        <topology evidence="1">Lipid-anchor</topology>
        <orientation evidence="1">Cytoplasmic side</orientation>
    </subcellularLocation>
    <text evidence="1">Component of the inner side of the enveloped virion (EV) membrane. F13 is associated post-translationally with membranes (By similarity).</text>
</comment>